<name>ERA_CAMFF</name>
<dbReference type="EMBL" id="CP000487">
    <property type="protein sequence ID" value="ABK83276.1"/>
    <property type="molecule type" value="Genomic_DNA"/>
</dbReference>
<dbReference type="RefSeq" id="WP_011732038.1">
    <property type="nucleotide sequence ID" value="NC_008599.1"/>
</dbReference>
<dbReference type="SMR" id="A0RPN6"/>
<dbReference type="GeneID" id="61064832"/>
<dbReference type="KEGG" id="cff:CFF8240_1003"/>
<dbReference type="eggNOG" id="COG1159">
    <property type="taxonomic scope" value="Bacteria"/>
</dbReference>
<dbReference type="HOGENOM" id="CLU_038009_1_0_7"/>
<dbReference type="Proteomes" id="UP000000760">
    <property type="component" value="Chromosome"/>
</dbReference>
<dbReference type="GO" id="GO:0005829">
    <property type="term" value="C:cytosol"/>
    <property type="evidence" value="ECO:0007669"/>
    <property type="project" value="TreeGrafter"/>
</dbReference>
<dbReference type="GO" id="GO:0005886">
    <property type="term" value="C:plasma membrane"/>
    <property type="evidence" value="ECO:0007669"/>
    <property type="project" value="UniProtKB-SubCell"/>
</dbReference>
<dbReference type="GO" id="GO:0005525">
    <property type="term" value="F:GTP binding"/>
    <property type="evidence" value="ECO:0007669"/>
    <property type="project" value="UniProtKB-UniRule"/>
</dbReference>
<dbReference type="GO" id="GO:0003924">
    <property type="term" value="F:GTPase activity"/>
    <property type="evidence" value="ECO:0007669"/>
    <property type="project" value="UniProtKB-UniRule"/>
</dbReference>
<dbReference type="GO" id="GO:0043024">
    <property type="term" value="F:ribosomal small subunit binding"/>
    <property type="evidence" value="ECO:0007669"/>
    <property type="project" value="TreeGrafter"/>
</dbReference>
<dbReference type="GO" id="GO:0070181">
    <property type="term" value="F:small ribosomal subunit rRNA binding"/>
    <property type="evidence" value="ECO:0007669"/>
    <property type="project" value="UniProtKB-UniRule"/>
</dbReference>
<dbReference type="GO" id="GO:0000028">
    <property type="term" value="P:ribosomal small subunit assembly"/>
    <property type="evidence" value="ECO:0007669"/>
    <property type="project" value="TreeGrafter"/>
</dbReference>
<dbReference type="CDD" id="cd04163">
    <property type="entry name" value="Era"/>
    <property type="match status" value="1"/>
</dbReference>
<dbReference type="CDD" id="cd22534">
    <property type="entry name" value="KH-II_Era"/>
    <property type="match status" value="1"/>
</dbReference>
<dbReference type="Gene3D" id="3.30.300.20">
    <property type="match status" value="1"/>
</dbReference>
<dbReference type="Gene3D" id="3.40.50.300">
    <property type="entry name" value="P-loop containing nucleotide triphosphate hydrolases"/>
    <property type="match status" value="1"/>
</dbReference>
<dbReference type="HAMAP" id="MF_00367">
    <property type="entry name" value="GTPase_Era"/>
    <property type="match status" value="1"/>
</dbReference>
<dbReference type="InterPro" id="IPR030388">
    <property type="entry name" value="G_ERA_dom"/>
</dbReference>
<dbReference type="InterPro" id="IPR006073">
    <property type="entry name" value="GTP-bd"/>
</dbReference>
<dbReference type="InterPro" id="IPR005662">
    <property type="entry name" value="GTPase_Era-like"/>
</dbReference>
<dbReference type="InterPro" id="IPR015946">
    <property type="entry name" value="KH_dom-like_a/b"/>
</dbReference>
<dbReference type="InterPro" id="IPR004044">
    <property type="entry name" value="KH_dom_type_2"/>
</dbReference>
<dbReference type="InterPro" id="IPR009019">
    <property type="entry name" value="KH_sf_prok-type"/>
</dbReference>
<dbReference type="InterPro" id="IPR027417">
    <property type="entry name" value="P-loop_NTPase"/>
</dbReference>
<dbReference type="InterPro" id="IPR005225">
    <property type="entry name" value="Small_GTP-bd"/>
</dbReference>
<dbReference type="NCBIfam" id="TIGR00436">
    <property type="entry name" value="era"/>
    <property type="match status" value="1"/>
</dbReference>
<dbReference type="NCBIfam" id="NF000908">
    <property type="entry name" value="PRK00089.1"/>
    <property type="match status" value="1"/>
</dbReference>
<dbReference type="NCBIfam" id="TIGR00231">
    <property type="entry name" value="small_GTP"/>
    <property type="match status" value="1"/>
</dbReference>
<dbReference type="PANTHER" id="PTHR42698">
    <property type="entry name" value="GTPASE ERA"/>
    <property type="match status" value="1"/>
</dbReference>
<dbReference type="PANTHER" id="PTHR42698:SF1">
    <property type="entry name" value="GTPASE ERA, MITOCHONDRIAL"/>
    <property type="match status" value="1"/>
</dbReference>
<dbReference type="Pfam" id="PF07650">
    <property type="entry name" value="KH_2"/>
    <property type="match status" value="1"/>
</dbReference>
<dbReference type="Pfam" id="PF01926">
    <property type="entry name" value="MMR_HSR1"/>
    <property type="match status" value="1"/>
</dbReference>
<dbReference type="SUPFAM" id="SSF52540">
    <property type="entry name" value="P-loop containing nucleoside triphosphate hydrolases"/>
    <property type="match status" value="1"/>
</dbReference>
<dbReference type="SUPFAM" id="SSF54814">
    <property type="entry name" value="Prokaryotic type KH domain (KH-domain type II)"/>
    <property type="match status" value="1"/>
</dbReference>
<dbReference type="PROSITE" id="PS51713">
    <property type="entry name" value="G_ERA"/>
    <property type="match status" value="1"/>
</dbReference>
<dbReference type="PROSITE" id="PS50823">
    <property type="entry name" value="KH_TYPE_2"/>
    <property type="match status" value="1"/>
</dbReference>
<accession>A0RPN6</accession>
<reference key="1">
    <citation type="submission" date="2006-11" db="EMBL/GenBank/DDBJ databases">
        <title>Sequence of Campylobacter fetus subsp. fetus 82-40.</title>
        <authorList>
            <person name="Fouts D.E."/>
            <person name="Nelson K.E."/>
        </authorList>
    </citation>
    <scope>NUCLEOTIDE SEQUENCE [LARGE SCALE GENOMIC DNA]</scope>
    <source>
        <strain>82-40</strain>
    </source>
</reference>
<feature type="chain" id="PRO_1000079664" description="GTPase Era">
    <location>
        <begin position="1"/>
        <end position="289"/>
    </location>
</feature>
<feature type="domain" description="Era-type G" evidence="2">
    <location>
        <begin position="2"/>
        <end position="167"/>
    </location>
</feature>
<feature type="domain" description="KH type-2" evidence="1">
    <location>
        <begin position="198"/>
        <end position="274"/>
    </location>
</feature>
<feature type="region of interest" description="G1" evidence="2">
    <location>
        <begin position="10"/>
        <end position="17"/>
    </location>
</feature>
<feature type="region of interest" description="G2" evidence="2">
    <location>
        <begin position="36"/>
        <end position="40"/>
    </location>
</feature>
<feature type="region of interest" description="G3" evidence="2">
    <location>
        <begin position="57"/>
        <end position="60"/>
    </location>
</feature>
<feature type="region of interest" description="G4" evidence="2">
    <location>
        <begin position="116"/>
        <end position="119"/>
    </location>
</feature>
<feature type="region of interest" description="G5" evidence="2">
    <location>
        <begin position="146"/>
        <end position="148"/>
    </location>
</feature>
<feature type="binding site" evidence="1">
    <location>
        <begin position="10"/>
        <end position="17"/>
    </location>
    <ligand>
        <name>GTP</name>
        <dbReference type="ChEBI" id="CHEBI:37565"/>
    </ligand>
</feature>
<feature type="binding site" evidence="1">
    <location>
        <begin position="57"/>
        <end position="61"/>
    </location>
    <ligand>
        <name>GTP</name>
        <dbReference type="ChEBI" id="CHEBI:37565"/>
    </ligand>
</feature>
<feature type="binding site" evidence="1">
    <location>
        <begin position="116"/>
        <end position="119"/>
    </location>
    <ligand>
        <name>GTP</name>
        <dbReference type="ChEBI" id="CHEBI:37565"/>
    </ligand>
</feature>
<gene>
    <name evidence="1" type="primary">era</name>
    <name type="ordered locus">CFF8240_1003</name>
</gene>
<evidence type="ECO:0000255" key="1">
    <source>
        <dbReference type="HAMAP-Rule" id="MF_00367"/>
    </source>
</evidence>
<evidence type="ECO:0000255" key="2">
    <source>
        <dbReference type="PROSITE-ProRule" id="PRU01050"/>
    </source>
</evidence>
<comment type="function">
    <text evidence="1">An essential GTPase that binds both GDP and GTP, with rapid nucleotide exchange. Plays a role in 16S rRNA processing and 30S ribosomal subunit biogenesis and possibly also in cell cycle regulation and energy metabolism.</text>
</comment>
<comment type="subunit">
    <text evidence="1">Monomer.</text>
</comment>
<comment type="subcellular location">
    <subcellularLocation>
        <location>Cytoplasm</location>
    </subcellularLocation>
    <subcellularLocation>
        <location evidence="1">Cell inner membrane</location>
        <topology evidence="1">Peripheral membrane protein</topology>
    </subcellularLocation>
</comment>
<comment type="similarity">
    <text evidence="1 2">Belongs to the TRAFAC class TrmE-Era-EngA-EngB-Septin-like GTPase superfamily. Era GTPase family.</text>
</comment>
<proteinExistence type="inferred from homology"/>
<sequence length="289" mass="33305">MKSGFISLIGRTNAGKSSLLNYLLNEKISMVSHKQNATRRKINGIVMHKDSQAIFIDTPGLHESNKTMNKLMVEAAIKSIGDCDLLLFVASVFDNIENYKKFLNLKKDAPHLIAITKIDEASDKEIFAKLNEYQIYSDEFKAIIPLSVKKQAYKNILLDEIYKYLPEHEYFYDPQYLTTANEREIFRDFILEAVYECVSDEVPYSTDVNVDKVVEKQNITEIYATIITDNEHHKAILIGKNGQTIKRIGINARKIINTLLNNKIFLKINVKIDKNWNSNESIIKKNFLY</sequence>
<organism>
    <name type="scientific">Campylobacter fetus subsp. fetus (strain 82-40)</name>
    <dbReference type="NCBI Taxonomy" id="360106"/>
    <lineage>
        <taxon>Bacteria</taxon>
        <taxon>Pseudomonadati</taxon>
        <taxon>Campylobacterota</taxon>
        <taxon>Epsilonproteobacteria</taxon>
        <taxon>Campylobacterales</taxon>
        <taxon>Campylobacteraceae</taxon>
        <taxon>Campylobacter</taxon>
    </lineage>
</organism>
<protein>
    <recommendedName>
        <fullName evidence="1">GTPase Era</fullName>
    </recommendedName>
</protein>
<keyword id="KW-0997">Cell inner membrane</keyword>
<keyword id="KW-1003">Cell membrane</keyword>
<keyword id="KW-0963">Cytoplasm</keyword>
<keyword id="KW-0342">GTP-binding</keyword>
<keyword id="KW-0472">Membrane</keyword>
<keyword id="KW-0547">Nucleotide-binding</keyword>
<keyword id="KW-0690">Ribosome biogenesis</keyword>
<keyword id="KW-0694">RNA-binding</keyword>
<keyword id="KW-0699">rRNA-binding</keyword>